<dbReference type="EMBL" id="CR382125">
    <property type="protein sequence ID" value="CAG99968.1"/>
    <property type="molecule type" value="Genomic_DNA"/>
</dbReference>
<dbReference type="RefSeq" id="XP_454881.1">
    <property type="nucleotide sequence ID" value="XM_454881.1"/>
</dbReference>
<dbReference type="SMR" id="Q6CMF8"/>
<dbReference type="FunCoup" id="Q6CMF8">
    <property type="interactions" value="609"/>
</dbReference>
<dbReference type="STRING" id="284590.Q6CMF8"/>
<dbReference type="PaxDb" id="284590-Q6CMF8"/>
<dbReference type="KEGG" id="kla:KLLA0_E20593g"/>
<dbReference type="eggNOG" id="KOG1654">
    <property type="taxonomic scope" value="Eukaryota"/>
</dbReference>
<dbReference type="HOGENOM" id="CLU_119276_0_1_1"/>
<dbReference type="InParanoid" id="Q6CMF8"/>
<dbReference type="OMA" id="AVYQEHK"/>
<dbReference type="Proteomes" id="UP000000598">
    <property type="component" value="Chromosome E"/>
</dbReference>
<dbReference type="GO" id="GO:0000421">
    <property type="term" value="C:autophagosome membrane"/>
    <property type="evidence" value="ECO:0007669"/>
    <property type="project" value="UniProtKB-SubCell"/>
</dbReference>
<dbReference type="GO" id="GO:0031410">
    <property type="term" value="C:cytoplasmic vesicle"/>
    <property type="evidence" value="ECO:0007669"/>
    <property type="project" value="UniProtKB-KW"/>
</dbReference>
<dbReference type="GO" id="GO:0006914">
    <property type="term" value="P:autophagy"/>
    <property type="evidence" value="ECO:0007669"/>
    <property type="project" value="UniProtKB-KW"/>
</dbReference>
<dbReference type="GO" id="GO:0015031">
    <property type="term" value="P:protein transport"/>
    <property type="evidence" value="ECO:0007669"/>
    <property type="project" value="UniProtKB-KW"/>
</dbReference>
<dbReference type="CDD" id="cd16128">
    <property type="entry name" value="Ubl_ATG8"/>
    <property type="match status" value="1"/>
</dbReference>
<dbReference type="FunFam" id="3.10.20.90:FF:000010">
    <property type="entry name" value="Autophagy-related protein"/>
    <property type="match status" value="1"/>
</dbReference>
<dbReference type="Gene3D" id="3.10.20.90">
    <property type="entry name" value="Phosphatidylinositol 3-kinase Catalytic Subunit, Chain A, domain 1"/>
    <property type="match status" value="1"/>
</dbReference>
<dbReference type="InterPro" id="IPR004241">
    <property type="entry name" value="Atg8-like"/>
</dbReference>
<dbReference type="InterPro" id="IPR029071">
    <property type="entry name" value="Ubiquitin-like_domsf"/>
</dbReference>
<dbReference type="PANTHER" id="PTHR10969">
    <property type="entry name" value="MICROTUBULE-ASSOCIATED PROTEINS 1A/1B LIGHT CHAIN 3-RELATED"/>
    <property type="match status" value="1"/>
</dbReference>
<dbReference type="Pfam" id="PF02991">
    <property type="entry name" value="ATG8"/>
    <property type="match status" value="1"/>
</dbReference>
<dbReference type="SUPFAM" id="SSF54236">
    <property type="entry name" value="Ubiquitin-like"/>
    <property type="match status" value="1"/>
</dbReference>
<comment type="function">
    <text evidence="1">Ubiquitin-like modifier involved in autophagosome formation. With ATG4, mediates the delivery of the autophagosomes to the vacuole via the microtubule cytoskeleton. Required for selective autophagic degradation of the nucleus (nucleophagy) as well as for mitophagy which contributes to regulate mitochondrial quantity and quality by eliminating the mitochondria to a basal level to fulfill cellular energy requirements and preventing excess ROS production. Participates also in membrane fusion events that take place in the early secretory pathway. Also involved in endoplasmic reticulum-specific autophagic process and is essential for the survival of cells subjected to severe ER stress. The ATG8-PE conjugate mediates tethering between adjacent membranes and stimulates membrane hemifusion, leading to expansion of the autophagosomal membrane during autophagy.</text>
</comment>
<comment type="subcellular location">
    <subcellularLocation>
        <location evidence="1">Cytoplasmic vesicle</location>
        <location evidence="1">Autophagosome membrane</location>
        <topology evidence="1">Lipid-anchor</topology>
    </subcellularLocation>
    <subcellularLocation>
        <location evidence="1">Vacuole membrane</location>
        <topology evidence="1">Lipid-anchor</topology>
    </subcellularLocation>
</comment>
<comment type="PTM">
    <text evidence="1">The C-terminal 8 residues are removed to expose Gly-116 at the C-terminus. The C-terminal Gly is then amidated with phosphatidylethanolamine by an activating system similar to that for ubiquitin.</text>
</comment>
<comment type="similarity">
    <text evidence="2">Belongs to the ATG8 family.</text>
</comment>
<keyword id="KW-0072">Autophagy</keyword>
<keyword id="KW-0968">Cytoplasmic vesicle</keyword>
<keyword id="KW-0449">Lipoprotein</keyword>
<keyword id="KW-0472">Membrane</keyword>
<keyword id="KW-0653">Protein transport</keyword>
<keyword id="KW-1185">Reference proteome</keyword>
<keyword id="KW-0813">Transport</keyword>
<keyword id="KW-0833">Ubl conjugation pathway</keyword>
<keyword id="KW-0926">Vacuole</keyword>
<evidence type="ECO:0000250" key="1">
    <source>
        <dbReference type="UniProtKB" id="P38182"/>
    </source>
</evidence>
<evidence type="ECO:0000305" key="2"/>
<accession>Q6CMF8</accession>
<name>ATG8_KLULA</name>
<proteinExistence type="inferred from homology"/>
<reference key="1">
    <citation type="journal article" date="2004" name="Nature">
        <title>Genome evolution in yeasts.</title>
        <authorList>
            <person name="Dujon B."/>
            <person name="Sherman D."/>
            <person name="Fischer G."/>
            <person name="Durrens P."/>
            <person name="Casaregola S."/>
            <person name="Lafontaine I."/>
            <person name="de Montigny J."/>
            <person name="Marck C."/>
            <person name="Neuveglise C."/>
            <person name="Talla E."/>
            <person name="Goffard N."/>
            <person name="Frangeul L."/>
            <person name="Aigle M."/>
            <person name="Anthouard V."/>
            <person name="Babour A."/>
            <person name="Barbe V."/>
            <person name="Barnay S."/>
            <person name="Blanchin S."/>
            <person name="Beckerich J.-M."/>
            <person name="Beyne E."/>
            <person name="Bleykasten C."/>
            <person name="Boisrame A."/>
            <person name="Boyer J."/>
            <person name="Cattolico L."/>
            <person name="Confanioleri F."/>
            <person name="de Daruvar A."/>
            <person name="Despons L."/>
            <person name="Fabre E."/>
            <person name="Fairhead C."/>
            <person name="Ferry-Dumazet H."/>
            <person name="Groppi A."/>
            <person name="Hantraye F."/>
            <person name="Hennequin C."/>
            <person name="Jauniaux N."/>
            <person name="Joyet P."/>
            <person name="Kachouri R."/>
            <person name="Kerrest A."/>
            <person name="Koszul R."/>
            <person name="Lemaire M."/>
            <person name="Lesur I."/>
            <person name="Ma L."/>
            <person name="Muller H."/>
            <person name="Nicaud J.-M."/>
            <person name="Nikolski M."/>
            <person name="Oztas S."/>
            <person name="Ozier-Kalogeropoulos O."/>
            <person name="Pellenz S."/>
            <person name="Potier S."/>
            <person name="Richard G.-F."/>
            <person name="Straub M.-L."/>
            <person name="Suleau A."/>
            <person name="Swennen D."/>
            <person name="Tekaia F."/>
            <person name="Wesolowski-Louvel M."/>
            <person name="Westhof E."/>
            <person name="Wirth B."/>
            <person name="Zeniou-Meyer M."/>
            <person name="Zivanovic Y."/>
            <person name="Bolotin-Fukuhara M."/>
            <person name="Thierry A."/>
            <person name="Bouchier C."/>
            <person name="Caudron B."/>
            <person name="Scarpelli C."/>
            <person name="Gaillardin C."/>
            <person name="Weissenbach J."/>
            <person name="Wincker P."/>
            <person name="Souciet J.-L."/>
        </authorList>
    </citation>
    <scope>NUCLEOTIDE SEQUENCE [LARGE SCALE GENOMIC DNA]</scope>
    <source>
        <strain>ATCC 8585 / CBS 2359 / DSM 70799 / NBRC 1267 / NRRL Y-1140 / WM37</strain>
    </source>
</reference>
<sequence>MKSAFKSEFPFEKRKAESERIVQKFHNRIPVICERGGKSDIPDIDKRKYLVPGDLTVGQFVYVIRKRIKLPAEKAIFIFVNDTLPPTAALMSSIYQQHKDKDGFLYVSYSSENTFGDDALFSEE</sequence>
<protein>
    <recommendedName>
        <fullName>Autophagy-related protein 8</fullName>
    </recommendedName>
    <alternativeName>
        <fullName>Autophagy-related ubiquitin-like modifier ATG8</fullName>
    </alternativeName>
</protein>
<organism>
    <name type="scientific">Kluyveromyces lactis (strain ATCC 8585 / CBS 2359 / DSM 70799 / NBRC 1267 / NRRL Y-1140 / WM37)</name>
    <name type="common">Yeast</name>
    <name type="synonym">Candida sphaerica</name>
    <dbReference type="NCBI Taxonomy" id="284590"/>
    <lineage>
        <taxon>Eukaryota</taxon>
        <taxon>Fungi</taxon>
        <taxon>Dikarya</taxon>
        <taxon>Ascomycota</taxon>
        <taxon>Saccharomycotina</taxon>
        <taxon>Saccharomycetes</taxon>
        <taxon>Saccharomycetales</taxon>
        <taxon>Saccharomycetaceae</taxon>
        <taxon>Kluyveromyces</taxon>
    </lineage>
</organism>
<feature type="chain" id="PRO_0000017220" description="Autophagy-related protein 8">
    <location>
        <begin position="1"/>
        <end position="116"/>
    </location>
</feature>
<feature type="propeptide" id="PRO_0000017221" description="Removed in mature form" evidence="1">
    <location>
        <begin position="117"/>
        <end position="124"/>
    </location>
</feature>
<feature type="site" description="Cleavage; by ATG4" evidence="1">
    <location>
        <begin position="116"/>
        <end position="117"/>
    </location>
</feature>
<feature type="lipid moiety-binding region" description="Phosphatidylethanolamine amidated glycine" evidence="1">
    <location>
        <position position="116"/>
    </location>
</feature>
<gene>
    <name type="primary">ATG8</name>
    <name type="ordered locus">KLLA0E20669g</name>
</gene>